<accession>A7ZQ13</accession>
<protein>
    <recommendedName>
        <fullName evidence="1">Elongation factor 4</fullName>
        <shortName evidence="1">EF-4</shortName>
        <ecNumber evidence="1">3.6.5.n1</ecNumber>
    </recommendedName>
    <alternativeName>
        <fullName evidence="1">Ribosomal back-translocase LepA</fullName>
    </alternativeName>
</protein>
<dbReference type="EC" id="3.6.5.n1" evidence="1"/>
<dbReference type="EMBL" id="CP000800">
    <property type="protein sequence ID" value="ABV19852.1"/>
    <property type="molecule type" value="Genomic_DNA"/>
</dbReference>
<dbReference type="RefSeq" id="WP_000790168.1">
    <property type="nucleotide sequence ID" value="NC_009801.1"/>
</dbReference>
<dbReference type="SMR" id="A7ZQ13"/>
<dbReference type="GeneID" id="93774522"/>
<dbReference type="KEGG" id="ecw:EcE24377A_2855"/>
<dbReference type="HOGENOM" id="CLU_009995_3_3_6"/>
<dbReference type="Proteomes" id="UP000001122">
    <property type="component" value="Chromosome"/>
</dbReference>
<dbReference type="GO" id="GO:0005886">
    <property type="term" value="C:plasma membrane"/>
    <property type="evidence" value="ECO:0007669"/>
    <property type="project" value="UniProtKB-SubCell"/>
</dbReference>
<dbReference type="GO" id="GO:0005525">
    <property type="term" value="F:GTP binding"/>
    <property type="evidence" value="ECO:0007669"/>
    <property type="project" value="UniProtKB-UniRule"/>
</dbReference>
<dbReference type="GO" id="GO:0003924">
    <property type="term" value="F:GTPase activity"/>
    <property type="evidence" value="ECO:0007669"/>
    <property type="project" value="UniProtKB-UniRule"/>
</dbReference>
<dbReference type="GO" id="GO:0097216">
    <property type="term" value="F:guanosine tetraphosphate binding"/>
    <property type="evidence" value="ECO:0007669"/>
    <property type="project" value="UniProtKB-ARBA"/>
</dbReference>
<dbReference type="GO" id="GO:0043022">
    <property type="term" value="F:ribosome binding"/>
    <property type="evidence" value="ECO:0007669"/>
    <property type="project" value="UniProtKB-UniRule"/>
</dbReference>
<dbReference type="GO" id="GO:0003746">
    <property type="term" value="F:translation elongation factor activity"/>
    <property type="evidence" value="ECO:0007669"/>
    <property type="project" value="UniProtKB-UniRule"/>
</dbReference>
<dbReference type="GO" id="GO:0045727">
    <property type="term" value="P:positive regulation of translation"/>
    <property type="evidence" value="ECO:0007669"/>
    <property type="project" value="UniProtKB-UniRule"/>
</dbReference>
<dbReference type="CDD" id="cd03699">
    <property type="entry name" value="EF4_II"/>
    <property type="match status" value="1"/>
</dbReference>
<dbReference type="CDD" id="cd16260">
    <property type="entry name" value="EF4_III"/>
    <property type="match status" value="1"/>
</dbReference>
<dbReference type="CDD" id="cd01890">
    <property type="entry name" value="LepA"/>
    <property type="match status" value="1"/>
</dbReference>
<dbReference type="CDD" id="cd03709">
    <property type="entry name" value="lepA_C"/>
    <property type="match status" value="1"/>
</dbReference>
<dbReference type="FunFam" id="3.30.70.240:FF:000005">
    <property type="entry name" value="Elongation factor 4"/>
    <property type="match status" value="1"/>
</dbReference>
<dbReference type="FunFam" id="3.40.50.300:FF:000078">
    <property type="entry name" value="Elongation factor 4"/>
    <property type="match status" value="1"/>
</dbReference>
<dbReference type="FunFam" id="2.40.30.10:FF:000015">
    <property type="entry name" value="Translation factor GUF1, mitochondrial"/>
    <property type="match status" value="1"/>
</dbReference>
<dbReference type="FunFam" id="3.30.70.2570:FF:000001">
    <property type="entry name" value="Translation factor GUF1, mitochondrial"/>
    <property type="match status" value="1"/>
</dbReference>
<dbReference type="FunFam" id="3.30.70.870:FF:000004">
    <property type="entry name" value="Translation factor GUF1, mitochondrial"/>
    <property type="match status" value="1"/>
</dbReference>
<dbReference type="Gene3D" id="3.30.70.240">
    <property type="match status" value="1"/>
</dbReference>
<dbReference type="Gene3D" id="3.30.70.2570">
    <property type="entry name" value="Elongation factor 4, C-terminal domain"/>
    <property type="match status" value="1"/>
</dbReference>
<dbReference type="Gene3D" id="3.30.70.870">
    <property type="entry name" value="Elongation Factor G (Translational Gtpase), domain 3"/>
    <property type="match status" value="1"/>
</dbReference>
<dbReference type="Gene3D" id="3.40.50.300">
    <property type="entry name" value="P-loop containing nucleotide triphosphate hydrolases"/>
    <property type="match status" value="1"/>
</dbReference>
<dbReference type="Gene3D" id="2.40.30.10">
    <property type="entry name" value="Translation factors"/>
    <property type="match status" value="1"/>
</dbReference>
<dbReference type="HAMAP" id="MF_00071">
    <property type="entry name" value="LepA"/>
    <property type="match status" value="1"/>
</dbReference>
<dbReference type="InterPro" id="IPR006297">
    <property type="entry name" value="EF-4"/>
</dbReference>
<dbReference type="InterPro" id="IPR035647">
    <property type="entry name" value="EFG_III/V"/>
</dbReference>
<dbReference type="InterPro" id="IPR000640">
    <property type="entry name" value="EFG_V-like"/>
</dbReference>
<dbReference type="InterPro" id="IPR004161">
    <property type="entry name" value="EFTu-like_2"/>
</dbReference>
<dbReference type="InterPro" id="IPR031157">
    <property type="entry name" value="G_TR_CS"/>
</dbReference>
<dbReference type="InterPro" id="IPR038363">
    <property type="entry name" value="LepA_C_sf"/>
</dbReference>
<dbReference type="InterPro" id="IPR013842">
    <property type="entry name" value="LepA_CTD"/>
</dbReference>
<dbReference type="InterPro" id="IPR035654">
    <property type="entry name" value="LepA_IV"/>
</dbReference>
<dbReference type="InterPro" id="IPR027417">
    <property type="entry name" value="P-loop_NTPase"/>
</dbReference>
<dbReference type="InterPro" id="IPR005225">
    <property type="entry name" value="Small_GTP-bd"/>
</dbReference>
<dbReference type="InterPro" id="IPR000795">
    <property type="entry name" value="T_Tr_GTP-bd_dom"/>
</dbReference>
<dbReference type="NCBIfam" id="TIGR01393">
    <property type="entry name" value="lepA"/>
    <property type="match status" value="1"/>
</dbReference>
<dbReference type="NCBIfam" id="TIGR00231">
    <property type="entry name" value="small_GTP"/>
    <property type="match status" value="1"/>
</dbReference>
<dbReference type="PANTHER" id="PTHR43512:SF4">
    <property type="entry name" value="TRANSLATION FACTOR GUF1 HOMOLOG, CHLOROPLASTIC"/>
    <property type="match status" value="1"/>
</dbReference>
<dbReference type="PANTHER" id="PTHR43512">
    <property type="entry name" value="TRANSLATION FACTOR GUF1-RELATED"/>
    <property type="match status" value="1"/>
</dbReference>
<dbReference type="Pfam" id="PF00679">
    <property type="entry name" value="EFG_C"/>
    <property type="match status" value="1"/>
</dbReference>
<dbReference type="Pfam" id="PF00009">
    <property type="entry name" value="GTP_EFTU"/>
    <property type="match status" value="1"/>
</dbReference>
<dbReference type="Pfam" id="PF03144">
    <property type="entry name" value="GTP_EFTU_D2"/>
    <property type="match status" value="1"/>
</dbReference>
<dbReference type="Pfam" id="PF06421">
    <property type="entry name" value="LepA_C"/>
    <property type="match status" value="1"/>
</dbReference>
<dbReference type="PRINTS" id="PR00315">
    <property type="entry name" value="ELONGATNFCT"/>
</dbReference>
<dbReference type="SUPFAM" id="SSF54980">
    <property type="entry name" value="EF-G C-terminal domain-like"/>
    <property type="match status" value="2"/>
</dbReference>
<dbReference type="SUPFAM" id="SSF52540">
    <property type="entry name" value="P-loop containing nucleoside triphosphate hydrolases"/>
    <property type="match status" value="1"/>
</dbReference>
<dbReference type="PROSITE" id="PS00301">
    <property type="entry name" value="G_TR_1"/>
    <property type="match status" value="1"/>
</dbReference>
<dbReference type="PROSITE" id="PS51722">
    <property type="entry name" value="G_TR_2"/>
    <property type="match status" value="1"/>
</dbReference>
<reference key="1">
    <citation type="journal article" date="2008" name="J. Bacteriol.">
        <title>The pangenome structure of Escherichia coli: comparative genomic analysis of E. coli commensal and pathogenic isolates.</title>
        <authorList>
            <person name="Rasko D.A."/>
            <person name="Rosovitz M.J."/>
            <person name="Myers G.S.A."/>
            <person name="Mongodin E.F."/>
            <person name="Fricke W.F."/>
            <person name="Gajer P."/>
            <person name="Crabtree J."/>
            <person name="Sebaihia M."/>
            <person name="Thomson N.R."/>
            <person name="Chaudhuri R."/>
            <person name="Henderson I.R."/>
            <person name="Sperandio V."/>
            <person name="Ravel J."/>
        </authorList>
    </citation>
    <scope>NUCLEOTIDE SEQUENCE [LARGE SCALE GENOMIC DNA]</scope>
    <source>
        <strain>E24377A / ETEC</strain>
    </source>
</reference>
<organism>
    <name type="scientific">Escherichia coli O139:H28 (strain E24377A / ETEC)</name>
    <dbReference type="NCBI Taxonomy" id="331111"/>
    <lineage>
        <taxon>Bacteria</taxon>
        <taxon>Pseudomonadati</taxon>
        <taxon>Pseudomonadota</taxon>
        <taxon>Gammaproteobacteria</taxon>
        <taxon>Enterobacterales</taxon>
        <taxon>Enterobacteriaceae</taxon>
        <taxon>Escherichia</taxon>
    </lineage>
</organism>
<keyword id="KW-0997">Cell inner membrane</keyword>
<keyword id="KW-1003">Cell membrane</keyword>
<keyword id="KW-0342">GTP-binding</keyword>
<keyword id="KW-0378">Hydrolase</keyword>
<keyword id="KW-0472">Membrane</keyword>
<keyword id="KW-0547">Nucleotide-binding</keyword>
<keyword id="KW-0648">Protein biosynthesis</keyword>
<keyword id="KW-1185">Reference proteome</keyword>
<name>LEPA_ECO24</name>
<gene>
    <name evidence="1" type="primary">lepA</name>
    <name type="ordered locus">EcE24377A_2855</name>
</gene>
<evidence type="ECO:0000255" key="1">
    <source>
        <dbReference type="HAMAP-Rule" id="MF_00071"/>
    </source>
</evidence>
<sequence length="599" mass="66570">MKNIRNFSIIAHIDHGKSTLSDRIIQICGGLSDREMEAQVLDSMDLERERGITIKAQSVTLDYKASDGETYQLNFIDTPGHVDFSYEVSRSLAACEGALLVVDAGQGVEAQTLANCYTAMEMDLEVVPVLNKIDLPAADPERVAEEIEDIVGIDATDAVRCSAKTGVGVQDVLERLVRDIPPPEGDPEGPLQALIIDSWFDNYLGVVSLIRIKNGTLRKGDKVKVMSTGQTYNADRLGIFTPKQVDRTELKCGEVGWLVCAIKDIHGAPVGDTLTLARNPAEKALPGFKKVKPQVYAGLFPVSSDDYEAFRDALGKLSLNDASLFYEPESSSALGFGFRCGFLGLLHMEIIQERLEREYDLDLITTAPTVVYEVETTSREVIYVDSPSKLPAVNNIYELREPIAECHMLLPQAYLGNVITLCVEKRGVQTNMVYHGNQVALTYEIPMAEVVLDFFDRLKSTSRGYASLDYNFKRFQASDMVRVDVLINGERVDALALITHRDNSQNRGRELVEKMKDLIPRQQFDIAIQAAIGTHIIARSTVKQLRKNVLAKCYGGDISRKKKLLQKQKEGKKRMKQIGNVELPQEAFLAILHVGKDNK</sequence>
<feature type="chain" id="PRO_1000057472" description="Elongation factor 4">
    <location>
        <begin position="1"/>
        <end position="599"/>
    </location>
</feature>
<feature type="domain" description="tr-type G">
    <location>
        <begin position="2"/>
        <end position="184"/>
    </location>
</feature>
<feature type="binding site" evidence="1">
    <location>
        <begin position="14"/>
        <end position="19"/>
    </location>
    <ligand>
        <name>GTP</name>
        <dbReference type="ChEBI" id="CHEBI:37565"/>
    </ligand>
</feature>
<feature type="binding site" evidence="1">
    <location>
        <begin position="131"/>
        <end position="134"/>
    </location>
    <ligand>
        <name>GTP</name>
        <dbReference type="ChEBI" id="CHEBI:37565"/>
    </ligand>
</feature>
<comment type="function">
    <text evidence="1">Required for accurate and efficient protein synthesis under certain stress conditions. May act as a fidelity factor of the translation reaction, by catalyzing a one-codon backward translocation of tRNAs on improperly translocated ribosomes. Back-translocation proceeds from a post-translocation (POST) complex to a pre-translocation (PRE) complex, thus giving elongation factor G a second chance to translocate the tRNAs correctly. Binds to ribosomes in a GTP-dependent manner.</text>
</comment>
<comment type="catalytic activity">
    <reaction evidence="1">
        <text>GTP + H2O = GDP + phosphate + H(+)</text>
        <dbReference type="Rhea" id="RHEA:19669"/>
        <dbReference type="ChEBI" id="CHEBI:15377"/>
        <dbReference type="ChEBI" id="CHEBI:15378"/>
        <dbReference type="ChEBI" id="CHEBI:37565"/>
        <dbReference type="ChEBI" id="CHEBI:43474"/>
        <dbReference type="ChEBI" id="CHEBI:58189"/>
        <dbReference type="EC" id="3.6.5.n1"/>
    </reaction>
</comment>
<comment type="subcellular location">
    <subcellularLocation>
        <location evidence="1">Cell inner membrane</location>
        <topology evidence="1">Peripheral membrane protein</topology>
        <orientation evidence="1">Cytoplasmic side</orientation>
    </subcellularLocation>
</comment>
<comment type="similarity">
    <text evidence="1">Belongs to the TRAFAC class translation factor GTPase superfamily. Classic translation factor GTPase family. LepA subfamily.</text>
</comment>
<proteinExistence type="inferred from homology"/>